<gene>
    <name type="ordered locus">xcc-b100_4189</name>
</gene>
<dbReference type="EMBL" id="AM920689">
    <property type="protein sequence ID" value="CAP53558.1"/>
    <property type="molecule type" value="Genomic_DNA"/>
</dbReference>
<dbReference type="SMR" id="B0RYM2"/>
<dbReference type="KEGG" id="xca:xcc-b100_4189"/>
<dbReference type="HOGENOM" id="CLU_155118_0_0_6"/>
<dbReference type="Proteomes" id="UP000001188">
    <property type="component" value="Chromosome"/>
</dbReference>
<dbReference type="Gene3D" id="3.10.510.20">
    <property type="entry name" value="YcgL domain"/>
    <property type="match status" value="1"/>
</dbReference>
<dbReference type="HAMAP" id="MF_01866">
    <property type="entry name" value="UPF0745"/>
    <property type="match status" value="1"/>
</dbReference>
<dbReference type="InterPro" id="IPR038068">
    <property type="entry name" value="YcgL-like_sf"/>
</dbReference>
<dbReference type="InterPro" id="IPR027354">
    <property type="entry name" value="YcgL_dom"/>
</dbReference>
<dbReference type="PANTHER" id="PTHR38109">
    <property type="entry name" value="PROTEIN YCGL"/>
    <property type="match status" value="1"/>
</dbReference>
<dbReference type="PANTHER" id="PTHR38109:SF1">
    <property type="entry name" value="PROTEIN YCGL"/>
    <property type="match status" value="1"/>
</dbReference>
<dbReference type="Pfam" id="PF05166">
    <property type="entry name" value="YcgL"/>
    <property type="match status" value="1"/>
</dbReference>
<dbReference type="SUPFAM" id="SSF160191">
    <property type="entry name" value="YcgL-like"/>
    <property type="match status" value="1"/>
</dbReference>
<dbReference type="PROSITE" id="PS51648">
    <property type="entry name" value="YCGL"/>
    <property type="match status" value="1"/>
</dbReference>
<proteinExistence type="inferred from homology"/>
<sequence>MHAYVYKSQRKQDTFVYLATRDDFSVIPADVQARLAPFAFVLDVALTPERRLAQADADTVRAALASHGFYLQLPKTVVLAGECDYD</sequence>
<reference key="1">
    <citation type="journal article" date="2008" name="J. Biotechnol.">
        <title>The genome of Xanthomonas campestris pv. campestris B100 and its use for the reconstruction of metabolic pathways involved in xanthan biosynthesis.</title>
        <authorList>
            <person name="Vorhoelter F.-J."/>
            <person name="Schneiker S."/>
            <person name="Goesmann A."/>
            <person name="Krause L."/>
            <person name="Bekel T."/>
            <person name="Kaiser O."/>
            <person name="Linke B."/>
            <person name="Patschkowski T."/>
            <person name="Rueckert C."/>
            <person name="Schmid J."/>
            <person name="Sidhu V.K."/>
            <person name="Sieber V."/>
            <person name="Tauch A."/>
            <person name="Watt S.A."/>
            <person name="Weisshaar B."/>
            <person name="Becker A."/>
            <person name="Niehaus K."/>
            <person name="Puehler A."/>
        </authorList>
    </citation>
    <scope>NUCLEOTIDE SEQUENCE [LARGE SCALE GENOMIC DNA]</scope>
    <source>
        <strain>B100</strain>
    </source>
</reference>
<accession>B0RYM2</accession>
<feature type="chain" id="PRO_0000375405" description="YcgL domain-containing protein xcc-b100_4189">
    <location>
        <begin position="1"/>
        <end position="86"/>
    </location>
</feature>
<feature type="domain" description="YcgL" evidence="1">
    <location>
        <begin position="1"/>
        <end position="83"/>
    </location>
</feature>
<organism>
    <name type="scientific">Xanthomonas campestris pv. campestris (strain B100)</name>
    <dbReference type="NCBI Taxonomy" id="509169"/>
    <lineage>
        <taxon>Bacteria</taxon>
        <taxon>Pseudomonadati</taxon>
        <taxon>Pseudomonadota</taxon>
        <taxon>Gammaproteobacteria</taxon>
        <taxon>Lysobacterales</taxon>
        <taxon>Lysobacteraceae</taxon>
        <taxon>Xanthomonas</taxon>
    </lineage>
</organism>
<evidence type="ECO:0000255" key="1">
    <source>
        <dbReference type="HAMAP-Rule" id="MF_01866"/>
    </source>
</evidence>
<protein>
    <recommendedName>
        <fullName evidence="1">YcgL domain-containing protein xcc-b100_4189</fullName>
    </recommendedName>
</protein>
<name>Y4189_XANCB</name>